<protein>
    <recommendedName>
        <fullName evidence="1">Large ribosomal subunit protein bL9</fullName>
    </recommendedName>
    <alternativeName>
        <fullName evidence="2">50S ribosomal protein L9</fullName>
    </alternativeName>
</protein>
<reference key="1">
    <citation type="submission" date="2008-10" db="EMBL/GenBank/DDBJ databases">
        <title>Genome sequence of Ureaplasma urealyticum serovar 10 ATCC-33699.</title>
        <authorList>
            <person name="Shrivastava S."/>
            <person name="Methe B.A."/>
            <person name="Glass J."/>
            <person name="White K."/>
            <person name="Duffy L.B."/>
        </authorList>
    </citation>
    <scope>NUCLEOTIDE SEQUENCE [LARGE SCALE GENOMIC DNA]</scope>
    <source>
        <strain>ATCC 33699 / Western</strain>
    </source>
</reference>
<accession>B5ZC58</accession>
<evidence type="ECO:0000255" key="1">
    <source>
        <dbReference type="HAMAP-Rule" id="MF_00503"/>
    </source>
</evidence>
<evidence type="ECO:0000305" key="2"/>
<organism>
    <name type="scientific">Ureaplasma urealyticum serovar 10 (strain ATCC 33699 / Western)</name>
    <dbReference type="NCBI Taxonomy" id="565575"/>
    <lineage>
        <taxon>Bacteria</taxon>
        <taxon>Bacillati</taxon>
        <taxon>Mycoplasmatota</taxon>
        <taxon>Mycoplasmoidales</taxon>
        <taxon>Mycoplasmoidaceae</taxon>
        <taxon>Ureaplasma</taxon>
    </lineage>
</organism>
<gene>
    <name evidence="1" type="primary">rplI</name>
    <name type="ordered locus">UUR10_0642</name>
</gene>
<comment type="function">
    <text evidence="1">Binds to the 23S rRNA.</text>
</comment>
<comment type="similarity">
    <text evidence="1">Belongs to the bacterial ribosomal protein bL9 family.</text>
</comment>
<proteinExistence type="inferred from homology"/>
<keyword id="KW-0687">Ribonucleoprotein</keyword>
<keyword id="KW-0689">Ribosomal protein</keyword>
<keyword id="KW-0694">RNA-binding</keyword>
<keyword id="KW-0699">rRNA-binding</keyword>
<feature type="chain" id="PRO_1000126991" description="Large ribosomal subunit protein bL9">
    <location>
        <begin position="1"/>
        <end position="145"/>
    </location>
</feature>
<sequence length="145" mass="16300">MKVILLEDIANLGKKNDIVDVSDGYAKNFLIRQKKAVALTSKSQEVLNKDLAILQAQEQQAILDATLLKDELEQKPLHFFLKTNNLQTFGSISNKQIIDEINKDQKLVIKHMITKPHALGIGEHIVEISLHKKVIAKVNVIVSKE</sequence>
<dbReference type="EMBL" id="CP001184">
    <property type="protein sequence ID" value="ACI60246.1"/>
    <property type="molecule type" value="Genomic_DNA"/>
</dbReference>
<dbReference type="RefSeq" id="WP_004027115.1">
    <property type="nucleotide sequence ID" value="NC_011374.1"/>
</dbReference>
<dbReference type="SMR" id="B5ZC58"/>
<dbReference type="STRING" id="565575.UUR10_0642"/>
<dbReference type="KEGG" id="uue:UUR10_0642"/>
<dbReference type="eggNOG" id="COG0359">
    <property type="taxonomic scope" value="Bacteria"/>
</dbReference>
<dbReference type="HOGENOM" id="CLU_078938_3_1_14"/>
<dbReference type="OrthoDB" id="9788336at2"/>
<dbReference type="Proteomes" id="UP000002018">
    <property type="component" value="Chromosome"/>
</dbReference>
<dbReference type="GO" id="GO:1990904">
    <property type="term" value="C:ribonucleoprotein complex"/>
    <property type="evidence" value="ECO:0007669"/>
    <property type="project" value="UniProtKB-KW"/>
</dbReference>
<dbReference type="GO" id="GO:0005840">
    <property type="term" value="C:ribosome"/>
    <property type="evidence" value="ECO:0007669"/>
    <property type="project" value="UniProtKB-KW"/>
</dbReference>
<dbReference type="GO" id="GO:0019843">
    <property type="term" value="F:rRNA binding"/>
    <property type="evidence" value="ECO:0007669"/>
    <property type="project" value="UniProtKB-UniRule"/>
</dbReference>
<dbReference type="GO" id="GO:0003735">
    <property type="term" value="F:structural constituent of ribosome"/>
    <property type="evidence" value="ECO:0007669"/>
    <property type="project" value="InterPro"/>
</dbReference>
<dbReference type="GO" id="GO:0006412">
    <property type="term" value="P:translation"/>
    <property type="evidence" value="ECO:0007669"/>
    <property type="project" value="UniProtKB-UniRule"/>
</dbReference>
<dbReference type="Gene3D" id="3.10.430.100">
    <property type="entry name" value="Ribosomal protein L9, C-terminal domain"/>
    <property type="match status" value="1"/>
</dbReference>
<dbReference type="Gene3D" id="3.40.5.10">
    <property type="entry name" value="Ribosomal protein L9, N-terminal domain"/>
    <property type="match status" value="1"/>
</dbReference>
<dbReference type="HAMAP" id="MF_00503">
    <property type="entry name" value="Ribosomal_bL9"/>
    <property type="match status" value="1"/>
</dbReference>
<dbReference type="InterPro" id="IPR000244">
    <property type="entry name" value="Ribosomal_bL9"/>
</dbReference>
<dbReference type="InterPro" id="IPR009027">
    <property type="entry name" value="Ribosomal_bL9/RNase_H1_N"/>
</dbReference>
<dbReference type="InterPro" id="IPR020594">
    <property type="entry name" value="Ribosomal_bL9_bac/chp"/>
</dbReference>
<dbReference type="InterPro" id="IPR020069">
    <property type="entry name" value="Ribosomal_bL9_C"/>
</dbReference>
<dbReference type="InterPro" id="IPR036791">
    <property type="entry name" value="Ribosomal_bL9_C_sf"/>
</dbReference>
<dbReference type="InterPro" id="IPR020070">
    <property type="entry name" value="Ribosomal_bL9_N"/>
</dbReference>
<dbReference type="InterPro" id="IPR036935">
    <property type="entry name" value="Ribosomal_bL9_N_sf"/>
</dbReference>
<dbReference type="NCBIfam" id="TIGR00158">
    <property type="entry name" value="L9"/>
    <property type="match status" value="1"/>
</dbReference>
<dbReference type="PANTHER" id="PTHR21368">
    <property type="entry name" value="50S RIBOSOMAL PROTEIN L9"/>
    <property type="match status" value="1"/>
</dbReference>
<dbReference type="Pfam" id="PF03948">
    <property type="entry name" value="Ribosomal_L9_C"/>
    <property type="match status" value="1"/>
</dbReference>
<dbReference type="Pfam" id="PF01281">
    <property type="entry name" value="Ribosomal_L9_N"/>
    <property type="match status" value="1"/>
</dbReference>
<dbReference type="SUPFAM" id="SSF55658">
    <property type="entry name" value="L9 N-domain-like"/>
    <property type="match status" value="1"/>
</dbReference>
<dbReference type="SUPFAM" id="SSF55653">
    <property type="entry name" value="Ribosomal protein L9 C-domain"/>
    <property type="match status" value="1"/>
</dbReference>
<dbReference type="PROSITE" id="PS00651">
    <property type="entry name" value="RIBOSOMAL_L9"/>
    <property type="match status" value="1"/>
</dbReference>
<name>RL9_UREU1</name>